<gene>
    <name type="ORF">pKIWI503</name>
</gene>
<accession>P43389</accession>
<keyword id="KW-0479">Metal-binding</keyword>
<keyword id="KW-0480">Metal-thiolate cluster</keyword>
<sequence>MSDKCGNCDCADSSQCVKKGNSIDIVETDKSYIEDVVMGVPAAESGGKCKCGTSCPCVNCTCD</sequence>
<reference key="1">
    <citation type="journal article" date="1994" name="Plant Mol. Biol.">
        <title>Cloning and characterization of five cDNAs for genes differentially expressed during fruit development of kiwifruit (Actinidia deliciosa var. deliciosa).</title>
        <authorList>
            <person name="Ledger S.E."/>
            <person name="Gardner R.C."/>
        </authorList>
    </citation>
    <scope>NUCLEOTIDE SEQUENCE [MRNA]</scope>
    <source>
        <strain>cv. Hayward</strain>
        <tissue>Fruit</tissue>
    </source>
</reference>
<comment type="function">
    <text>Metallothioneins have a high content of cysteine residues that bind various heavy metals.</text>
</comment>
<comment type="developmental stage">
    <text>Has low levels of expression in young fruit but is induced late in fruit development and during fruit ripening.</text>
</comment>
<comment type="similarity">
    <text evidence="1">Belongs to the metallothionein superfamily. Type 15 family.</text>
</comment>
<evidence type="ECO:0000305" key="1"/>
<name>MT3_ACTDE</name>
<dbReference type="EMBL" id="L27811">
    <property type="protein sequence ID" value="AAA53072.1"/>
    <property type="molecule type" value="mRNA"/>
</dbReference>
<dbReference type="GO" id="GO:0005507">
    <property type="term" value="F:copper ion binding"/>
    <property type="evidence" value="ECO:0007669"/>
    <property type="project" value="InterPro"/>
</dbReference>
<dbReference type="GO" id="GO:0008270">
    <property type="term" value="F:zinc ion binding"/>
    <property type="evidence" value="ECO:0007669"/>
    <property type="project" value="InterPro"/>
</dbReference>
<dbReference type="GO" id="GO:1990748">
    <property type="term" value="P:cellular detoxification"/>
    <property type="evidence" value="ECO:0000250"/>
    <property type="project" value="UniProtKB"/>
</dbReference>
<dbReference type="GO" id="GO:0006878">
    <property type="term" value="P:intracellular copper ion homeostasis"/>
    <property type="evidence" value="ECO:0007669"/>
    <property type="project" value="InterPro"/>
</dbReference>
<dbReference type="InterPro" id="IPR044671">
    <property type="entry name" value="MT3"/>
</dbReference>
<dbReference type="PANTHER" id="PTHR33357">
    <property type="entry name" value="METALLOTHIONEIN-LIKE PROTEIN 3"/>
    <property type="match status" value="1"/>
</dbReference>
<dbReference type="PANTHER" id="PTHR33357:SF3">
    <property type="entry name" value="METALLOTHIONEIN-LIKE PROTEIN 3"/>
    <property type="match status" value="1"/>
</dbReference>
<proteinExistence type="evidence at transcript level"/>
<organism>
    <name type="scientific">Actinidia deliciosa</name>
    <name type="common">Kiwi</name>
    <dbReference type="NCBI Taxonomy" id="3627"/>
    <lineage>
        <taxon>Eukaryota</taxon>
        <taxon>Viridiplantae</taxon>
        <taxon>Streptophyta</taxon>
        <taxon>Embryophyta</taxon>
        <taxon>Tracheophyta</taxon>
        <taxon>Spermatophyta</taxon>
        <taxon>Magnoliopsida</taxon>
        <taxon>eudicotyledons</taxon>
        <taxon>Gunneridae</taxon>
        <taxon>Pentapetalae</taxon>
        <taxon>asterids</taxon>
        <taxon>Ericales</taxon>
        <taxon>Actinidiaceae</taxon>
        <taxon>Actinidia</taxon>
    </lineage>
</organism>
<protein>
    <recommendedName>
        <fullName>Metallothionein-like protein type 3</fullName>
    </recommendedName>
</protein>
<feature type="chain" id="PRO_0000197413" description="Metallothionein-like protein type 3">
    <location>
        <begin position="1"/>
        <end position="63"/>
    </location>
</feature>